<protein>
    <recommendedName>
        <fullName evidence="7">DNA base-flipping protein</fullName>
    </recommendedName>
    <alternativeName>
        <fullName evidence="6">Alkyltransferase-like protein ATL</fullName>
    </alternativeName>
</protein>
<accession>P0AFP2</accession>
<accession>P75707</accession>
<accession>P77119</accession>
<accession>Q2MBX2</accession>
<gene>
    <name evidence="6" type="primary">atl</name>
    <name evidence="7" type="synonym">ybaZ</name>
    <name type="ordered locus">b0454</name>
    <name type="ordered locus">JW0444</name>
</gene>
<name>ATL_ECOLI</name>
<proteinExistence type="evidence at protein level"/>
<dbReference type="EMBL" id="U82664">
    <property type="protein sequence ID" value="AAB40210.1"/>
    <property type="status" value="ALT_FRAME"/>
    <property type="molecule type" value="Genomic_DNA"/>
</dbReference>
<dbReference type="EMBL" id="U00096">
    <property type="protein sequence ID" value="AAC73557.1"/>
    <property type="molecule type" value="Genomic_DNA"/>
</dbReference>
<dbReference type="EMBL" id="AP009048">
    <property type="protein sequence ID" value="BAE76234.1"/>
    <property type="molecule type" value="Genomic_DNA"/>
</dbReference>
<dbReference type="PIR" id="F64775">
    <property type="entry name" value="F64775"/>
</dbReference>
<dbReference type="RefSeq" id="NP_414988.1">
    <property type="nucleotide sequence ID" value="NC_000913.3"/>
</dbReference>
<dbReference type="SMR" id="P0AFP2"/>
<dbReference type="BioGRID" id="4259845">
    <property type="interactions" value="68"/>
</dbReference>
<dbReference type="DIP" id="DIP-48135N"/>
<dbReference type="FunCoup" id="P0AFP2">
    <property type="interactions" value="126"/>
</dbReference>
<dbReference type="IntAct" id="P0AFP2">
    <property type="interactions" value="16"/>
</dbReference>
<dbReference type="STRING" id="511145.b0454"/>
<dbReference type="PaxDb" id="511145-b0454"/>
<dbReference type="EnsemblBacteria" id="AAC73557">
    <property type="protein sequence ID" value="AAC73557"/>
    <property type="gene ID" value="b0454"/>
</dbReference>
<dbReference type="GeneID" id="945094"/>
<dbReference type="KEGG" id="ecj:JW0444"/>
<dbReference type="KEGG" id="eco:b0454"/>
<dbReference type="PATRIC" id="fig|511145.12.peg.473"/>
<dbReference type="EchoBASE" id="EB3043"/>
<dbReference type="eggNOG" id="COG3695">
    <property type="taxonomic scope" value="Bacteria"/>
</dbReference>
<dbReference type="HOGENOM" id="CLU_000445_52_5_6"/>
<dbReference type="InParanoid" id="P0AFP2"/>
<dbReference type="OMA" id="DEAEWWF"/>
<dbReference type="OrthoDB" id="9132167at2"/>
<dbReference type="PhylomeDB" id="P0AFP2"/>
<dbReference type="BioCyc" id="EcoCyc:G6251-MONOMER"/>
<dbReference type="PRO" id="PR:P0AFP2"/>
<dbReference type="Proteomes" id="UP000000625">
    <property type="component" value="Chromosome"/>
</dbReference>
<dbReference type="GO" id="GO:0003824">
    <property type="term" value="F:catalytic activity"/>
    <property type="evidence" value="ECO:0007669"/>
    <property type="project" value="InterPro"/>
</dbReference>
<dbReference type="GO" id="GO:0003684">
    <property type="term" value="F:damaged DNA binding"/>
    <property type="evidence" value="ECO:0000314"/>
    <property type="project" value="EcoCyc"/>
</dbReference>
<dbReference type="GO" id="GO:0006281">
    <property type="term" value="P:DNA repair"/>
    <property type="evidence" value="ECO:0000269"/>
    <property type="project" value="EcoCyc"/>
</dbReference>
<dbReference type="CDD" id="cd06445">
    <property type="entry name" value="ATase"/>
    <property type="match status" value="1"/>
</dbReference>
<dbReference type="FunFam" id="1.10.10.10:FF:000148">
    <property type="entry name" value="6-O-methylguanine DNA methyltransferase"/>
    <property type="match status" value="1"/>
</dbReference>
<dbReference type="Gene3D" id="1.10.10.10">
    <property type="entry name" value="Winged helix-like DNA-binding domain superfamily/Winged helix DNA-binding domain"/>
    <property type="match status" value="1"/>
</dbReference>
<dbReference type="InterPro" id="IPR052520">
    <property type="entry name" value="ATL_DNA_repair"/>
</dbReference>
<dbReference type="InterPro" id="IPR014048">
    <property type="entry name" value="MethylDNA_cys_MeTrfase_DNA-bd"/>
</dbReference>
<dbReference type="InterPro" id="IPR036217">
    <property type="entry name" value="MethylDNA_cys_MeTrfase_DNAb"/>
</dbReference>
<dbReference type="InterPro" id="IPR036388">
    <property type="entry name" value="WH-like_DNA-bd_sf"/>
</dbReference>
<dbReference type="NCBIfam" id="TIGR00589">
    <property type="entry name" value="ogt"/>
    <property type="match status" value="1"/>
</dbReference>
<dbReference type="PANTHER" id="PTHR42942">
    <property type="entry name" value="6-O-METHYLGUANINE DNA METHYLTRANSFERASE"/>
    <property type="match status" value="1"/>
</dbReference>
<dbReference type="PANTHER" id="PTHR42942:SF1">
    <property type="entry name" value="ALKYLTRANSFERASE-LIKE PROTEIN 1"/>
    <property type="match status" value="1"/>
</dbReference>
<dbReference type="Pfam" id="PF01035">
    <property type="entry name" value="DNA_binding_1"/>
    <property type="match status" value="1"/>
</dbReference>
<dbReference type="SUPFAM" id="SSF46767">
    <property type="entry name" value="Methylated DNA-protein cysteine methyltransferase, C-terminal domain"/>
    <property type="match status" value="1"/>
</dbReference>
<comment type="function">
    <text evidence="2 3 4 5">Involved in DNA damage recognition. Binds DNA containing O(6)-methylguanine and larger O(6)-alkylguanine adducts, and to double-stranded DNA that contains an AP (apurinic/apyrimidinic) site (PubMed:16027108, PubMed:18084297, PubMed:19269902, PubMed:20921378). Binds to the damaged base and flips the base out of the DNA duplex into an extrahelical conformation, which allows processing by repair proteins (PubMed:18084297). Works in partnership with the nucleotide excision repair (NER) pathway to enhance the repair of the O(6)-alkylguanine adducts larger than the methyl adduct (PubMed:19269902, PubMed:20921378). Also prevents methyl-directed mismatch repair (MMR)-mediated attack of the O(6)-alkylguanine:T mispairs for the larger alkyl groups (PubMed:20921378).</text>
</comment>
<comment type="subunit">
    <text evidence="3 4">Interacts with HelD and UvrA.</text>
</comment>
<comment type="interaction">
    <interactant intactId="EBI-560039">
        <id>P0AFP2</id>
    </interactant>
    <interactant intactId="EBI-552091">
        <id>P0A698</id>
        <label>uvrA</label>
    </interactant>
    <organismsDiffer>false</organismsDiffer>
    <experiments>2</experiments>
</comment>
<comment type="miscellaneous">
    <text evidence="2">Does not have alkyltransferase activity. A tryptophan residue replaces the cysteine at the known active site of MGMT.</text>
</comment>
<comment type="similarity">
    <text evidence="8">Belongs to the MGMT family. ATL subfamily.</text>
</comment>
<comment type="sequence caution" evidence="8">
    <conflict type="frameshift">
        <sequence resource="EMBL-CDS" id="AAB40210"/>
    </conflict>
</comment>
<evidence type="ECO:0000250" key="1">
    <source>
        <dbReference type="UniProtKB" id="Q9UTN9"/>
    </source>
</evidence>
<evidence type="ECO:0000269" key="2">
    <source>
    </source>
</evidence>
<evidence type="ECO:0000269" key="3">
    <source>
    </source>
</evidence>
<evidence type="ECO:0000269" key="4">
    <source>
    </source>
</evidence>
<evidence type="ECO:0000269" key="5">
    <source>
    </source>
</evidence>
<evidence type="ECO:0000303" key="6">
    <source>
    </source>
</evidence>
<evidence type="ECO:0000303" key="7">
    <source>
    </source>
</evidence>
<evidence type="ECO:0000305" key="8"/>
<feature type="chain" id="PRO_0000139390" description="DNA base-flipping protein">
    <location>
        <begin position="1"/>
        <end position="129"/>
    </location>
</feature>
<feature type="site" description="Required for phosphate rotation/nucleotide flipping" evidence="1">
    <location>
        <position position="52"/>
    </location>
</feature>
<feature type="site" description="Arg finger, required for nucleotide flipping" evidence="1">
    <location>
        <position position="66"/>
    </location>
</feature>
<feature type="mutagenesis site" description="Does not confer alkyltransferase activity." evidence="2">
    <original>W</original>
    <variation>C</variation>
    <location>
        <position position="83"/>
    </location>
</feature>
<keyword id="KW-0227">DNA damage</keyword>
<keyword id="KW-0238">DNA-binding</keyword>
<keyword id="KW-1185">Reference proteome</keyword>
<organism>
    <name type="scientific">Escherichia coli (strain K12)</name>
    <dbReference type="NCBI Taxonomy" id="83333"/>
    <lineage>
        <taxon>Bacteria</taxon>
        <taxon>Pseudomonadati</taxon>
        <taxon>Pseudomonadota</taxon>
        <taxon>Gammaproteobacteria</taxon>
        <taxon>Enterobacterales</taxon>
        <taxon>Enterobacteriaceae</taxon>
        <taxon>Escherichia</taxon>
    </lineage>
</organism>
<sequence length="129" mass="14450">MLVSCAMRLHSGVFPDYAEKLPQEEKMEKEDSFPQRVWQIVAAIPEGYVTTYGDVAKLAGSPRAARQVGGVLKRLPEGSTLPWHRVVNRHGTISLTGPDLQRQRQALLAEGVMVSGSGQIDLQRYRWNY</sequence>
<reference key="1">
    <citation type="submission" date="1997-01" db="EMBL/GenBank/DDBJ databases">
        <title>Sequence of minutes 4-25 of Escherichia coli.</title>
        <authorList>
            <person name="Chung E."/>
            <person name="Allen E."/>
            <person name="Araujo R."/>
            <person name="Aparicio A.M."/>
            <person name="Davis K."/>
            <person name="Duncan M."/>
            <person name="Federspiel N."/>
            <person name="Hyman R."/>
            <person name="Kalman S."/>
            <person name="Komp C."/>
            <person name="Kurdi O."/>
            <person name="Lew H."/>
            <person name="Lin D."/>
            <person name="Namath A."/>
            <person name="Oefner P."/>
            <person name="Roberts D."/>
            <person name="Schramm S."/>
            <person name="Davis R.W."/>
        </authorList>
    </citation>
    <scope>NUCLEOTIDE SEQUENCE [LARGE SCALE GENOMIC DNA]</scope>
    <source>
        <strain>K12 / MG1655 / ATCC 47076</strain>
    </source>
</reference>
<reference key="2">
    <citation type="journal article" date="1997" name="Science">
        <title>The complete genome sequence of Escherichia coli K-12.</title>
        <authorList>
            <person name="Blattner F.R."/>
            <person name="Plunkett G. III"/>
            <person name="Bloch C.A."/>
            <person name="Perna N.T."/>
            <person name="Burland V."/>
            <person name="Riley M."/>
            <person name="Collado-Vides J."/>
            <person name="Glasner J.D."/>
            <person name="Rode C.K."/>
            <person name="Mayhew G.F."/>
            <person name="Gregor J."/>
            <person name="Davis N.W."/>
            <person name="Kirkpatrick H.A."/>
            <person name="Goeden M.A."/>
            <person name="Rose D.J."/>
            <person name="Mau B."/>
            <person name="Shao Y."/>
        </authorList>
    </citation>
    <scope>NUCLEOTIDE SEQUENCE [LARGE SCALE GENOMIC DNA]</scope>
    <source>
        <strain>K12 / MG1655 / ATCC 47076</strain>
    </source>
</reference>
<reference key="3">
    <citation type="journal article" date="2006" name="Mol. Syst. Biol.">
        <title>Highly accurate genome sequences of Escherichia coli K-12 strains MG1655 and W3110.</title>
        <authorList>
            <person name="Hayashi K."/>
            <person name="Morooka N."/>
            <person name="Yamamoto Y."/>
            <person name="Fujita K."/>
            <person name="Isono K."/>
            <person name="Choi S."/>
            <person name="Ohtsubo E."/>
            <person name="Baba T."/>
            <person name="Wanner B.L."/>
            <person name="Mori H."/>
            <person name="Horiuchi T."/>
        </authorList>
    </citation>
    <scope>NUCLEOTIDE SEQUENCE [LARGE SCALE GENOMIC DNA]</scope>
    <source>
        <strain>K12 / W3110 / ATCC 27325 / DSM 5911</strain>
    </source>
</reference>
<reference key="4">
    <citation type="journal article" date="2005" name="Nucleic Acids Res.">
        <title>Inhibition of O6-methylguanine-DNA methyltransferase by an alkyltransferase-like protein from Escherichia coli.</title>
        <authorList>
            <person name="Pearson S.J."/>
            <person name="Ferguson J."/>
            <person name="Santibanez-Koref M."/>
            <person name="Margison G.P."/>
        </authorList>
    </citation>
    <scope>FUNCTION</scope>
    <scope>DNA-BINDING</scope>
    <scope>MUTAGENESIS OF TRP-83</scope>
</reference>
<reference key="5">
    <citation type="journal article" date="2008" name="Nat. Methods">
        <title>A proteome chip approach reveals new DNA damage recognition activities in Escherichia coli.</title>
        <authorList>
            <person name="Chen C.S."/>
            <person name="Korobkova E."/>
            <person name="Chen H."/>
            <person name="Zhu J."/>
            <person name="Jian X."/>
            <person name="Tao S.C."/>
            <person name="He C."/>
            <person name="Zhu H."/>
        </authorList>
    </citation>
    <scope>FUNCTION</scope>
    <scope>DNA-BINDING</scope>
    <scope>INTERACTION WITH HELD</scope>
    <source>
        <strain>K12</strain>
    </source>
</reference>
<reference key="6">
    <citation type="journal article" date="2009" name="DNA Repair">
        <title>The alkyltransferase-like ybaZ gene product enhances nucleotide excision repair of O(6)-alkylguanine adducts in E. coli.</title>
        <authorList>
            <person name="Mazon G."/>
            <person name="Philippin G."/>
            <person name="Cadet J."/>
            <person name="Gasparutto D."/>
            <person name="Fuchs R.P."/>
        </authorList>
    </citation>
    <scope>FUNCTION</scope>
    <scope>DNA-BINDING</scope>
    <scope>INTERACTION WITH UVRA</scope>
    <source>
        <strain>K12 / AB1157</strain>
    </source>
</reference>
<reference key="7">
    <citation type="journal article" date="2010" name="Proc. Natl. Acad. Sci. U.S.A.">
        <title>Alkyltransferase-like protein (eATL) prevents mismatch repair-mediated toxicity induced by O6-alkylguanine adducts in Escherichia coli.</title>
        <authorList>
            <person name="Mazon G."/>
            <person name="Philippin G."/>
            <person name="Cadet J."/>
            <person name="Gasparutto D."/>
            <person name="Modesti M."/>
            <person name="Fuchs R.P."/>
        </authorList>
    </citation>
    <scope>FUNCTION</scope>
</reference>